<evidence type="ECO:0000250" key="1"/>
<evidence type="ECO:0000255" key="2"/>
<evidence type="ECO:0000256" key="3">
    <source>
        <dbReference type="SAM" id="MobiDB-lite"/>
    </source>
</evidence>
<evidence type="ECO:0000305" key="4"/>
<name>VGLJ_CHV1</name>
<sequence length="117" mass="11614">MRSLLFVVGAWVAAAVTHLTPNAALATGTTPTVGANSTADPGTGANGTTVPAAGTPANSTTAAETPAPFPPVDFALPVVIGGLCALTLAAMGAGALLHRCCRRAAARRRQRAAYVYA</sequence>
<gene>
    <name type="primary">gJ</name>
</gene>
<keyword id="KW-0325">Glycoprotein</keyword>
<keyword id="KW-1038">Host endoplasmic reticulum</keyword>
<keyword id="KW-1039">Host endosome</keyword>
<keyword id="KW-1040">Host Golgi apparatus</keyword>
<keyword id="KW-1043">Host membrane</keyword>
<keyword id="KW-0472">Membrane</keyword>
<keyword id="KW-0732">Signal</keyword>
<keyword id="KW-0812">Transmembrane</keyword>
<keyword id="KW-1133">Transmembrane helix</keyword>
<proteinExistence type="inferred from homology"/>
<protein>
    <recommendedName>
        <fullName>Envelope glycoprotein J</fullName>
    </recommendedName>
</protein>
<organismHost>
    <name type="scientific">Homo sapiens</name>
    <name type="common">Human</name>
    <dbReference type="NCBI Taxonomy" id="9606"/>
</organismHost>
<organismHost>
    <name type="scientific">Macaca fascicularis</name>
    <name type="common">Crab-eating macaque</name>
    <name type="synonym">Cynomolgus monkey</name>
    <dbReference type="NCBI Taxonomy" id="9541"/>
</organismHost>
<organismHost>
    <name type="scientific">Macaca leonina</name>
    <name type="common">Northern pig-tailed macaque</name>
    <name type="synonym">Macaca nemestrina leonina</name>
    <dbReference type="NCBI Taxonomy" id="90387"/>
</organismHost>
<organismHost>
    <name type="scientific">Macaca mulatta</name>
    <name type="common">Rhesus macaque</name>
    <dbReference type="NCBI Taxonomy" id="9544"/>
</organismHost>
<organismHost>
    <name type="scientific">Macaca nemestrina</name>
    <name type="common">Pig-tailed macaque</name>
    <dbReference type="NCBI Taxonomy" id="9545"/>
</organismHost>
<feature type="signal peptide" evidence="2">
    <location>
        <begin position="1"/>
        <end position="26"/>
    </location>
</feature>
<feature type="chain" id="PRO_0000115791" description="Envelope glycoprotein J">
    <location>
        <begin position="27"/>
        <end position="117"/>
    </location>
</feature>
<feature type="topological domain" description="Extracellular" evidence="2">
    <location>
        <begin position="27"/>
        <end position="73"/>
    </location>
</feature>
<feature type="transmembrane region" description="Helical" evidence="2">
    <location>
        <begin position="74"/>
        <end position="94"/>
    </location>
</feature>
<feature type="topological domain" description="Cytoplasmic" evidence="2">
    <location>
        <begin position="95"/>
        <end position="117"/>
    </location>
</feature>
<feature type="region of interest" description="Disordered" evidence="3">
    <location>
        <begin position="26"/>
        <end position="64"/>
    </location>
</feature>
<feature type="compositionally biased region" description="Polar residues" evidence="3">
    <location>
        <begin position="27"/>
        <end position="40"/>
    </location>
</feature>
<feature type="glycosylation site" description="N-linked (GlcNAc...) asparagine; by host" evidence="2">
    <location>
        <position position="36"/>
    </location>
</feature>
<feature type="glycosylation site" description="N-linked (GlcNAc...) asparagine; by host" evidence="2">
    <location>
        <position position="46"/>
    </location>
</feature>
<feature type="glycosylation site" description="N-linked (GlcNAc...) asparagine; by host" evidence="2">
    <location>
        <position position="58"/>
    </location>
</feature>
<accession>P36344</accession>
<comment type="function">
    <text evidence="1">Inhibits host cell apoptosis. Induces an increase in reactive oxygen species (ROS) in the host cell (By similarity).</text>
</comment>
<comment type="subcellular location">
    <subcellularLocation>
        <location evidence="4">Host Golgi apparatus membrane</location>
        <topology evidence="4">Single-pass type I membrane protein</topology>
    </subcellularLocation>
    <subcellularLocation>
        <location evidence="4">Host endoplasmic reticulum membrane</location>
        <topology evidence="4">Single-pass type I membrane protein</topology>
    </subcellularLocation>
    <subcellularLocation>
        <location evidence="4">Host endosome membrane</location>
        <topology evidence="4">Single-pass type I membrane protein</topology>
    </subcellularLocation>
    <text evidence="1">Localizes to the endoplasmic reticulum, trans-Golgi network, and early endosomes.</text>
</comment>
<comment type="similarity">
    <text evidence="4">Belongs to the alphaherpesvirinae glycoprotein J family.</text>
</comment>
<organism>
    <name type="scientific">Cercopithecine herpesvirus 1</name>
    <name type="common">CeHV-1</name>
    <name type="synonym">Simian herpes B virus</name>
    <dbReference type="NCBI Taxonomy" id="10325"/>
    <lineage>
        <taxon>Viruses</taxon>
        <taxon>Duplodnaviria</taxon>
        <taxon>Heunggongvirae</taxon>
        <taxon>Peploviricota</taxon>
        <taxon>Herviviricetes</taxon>
        <taxon>Herpesvirales</taxon>
        <taxon>Orthoherpesviridae</taxon>
        <taxon>Alphaherpesvirinae</taxon>
        <taxon>Simplexvirus</taxon>
        <taxon>Simplexvirus macacinealpha1</taxon>
    </lineage>
</organism>
<reference key="1">
    <citation type="journal article" date="1992" name="J. Gen. Virol.">
        <title>Nucleotide sequence analysis of genes encoding glycoproteins D and J in simian herpes B virus.</title>
        <authorList>
            <person name="Bennett A.M."/>
            <person name="Harrington L."/>
            <person name="Kelly D.C."/>
        </authorList>
    </citation>
    <scope>NUCLEOTIDE SEQUENCE [GENOMIC DNA]</scope>
</reference>
<dbReference type="EMBL" id="S48101">
    <property type="protein sequence ID" value="AAB24128.1"/>
    <property type="molecule type" value="Genomic_DNA"/>
</dbReference>
<dbReference type="PIR" id="JQ1745">
    <property type="entry name" value="JQ1745"/>
</dbReference>
<dbReference type="GlyCosmos" id="P36344">
    <property type="glycosylation" value="3 sites, No reported glycans"/>
</dbReference>
<dbReference type="GO" id="GO:0044167">
    <property type="term" value="C:host cell endoplasmic reticulum membrane"/>
    <property type="evidence" value="ECO:0007669"/>
    <property type="project" value="UniProtKB-SubCell"/>
</dbReference>
<dbReference type="GO" id="GO:0044175">
    <property type="term" value="C:host cell endosome membrane"/>
    <property type="evidence" value="ECO:0007669"/>
    <property type="project" value="UniProtKB-SubCell"/>
</dbReference>
<dbReference type="GO" id="GO:0044178">
    <property type="term" value="C:host cell Golgi membrane"/>
    <property type="evidence" value="ECO:0007669"/>
    <property type="project" value="UniProtKB-SubCell"/>
</dbReference>
<dbReference type="GO" id="GO:0016020">
    <property type="term" value="C:membrane"/>
    <property type="evidence" value="ECO:0007669"/>
    <property type="project" value="UniProtKB-KW"/>
</dbReference>
<dbReference type="InterPro" id="IPR004913">
    <property type="entry name" value="Herpes_gJ"/>
</dbReference>
<dbReference type="Pfam" id="PF03229">
    <property type="entry name" value="Alpha_GJ"/>
    <property type="match status" value="1"/>
</dbReference>